<protein>
    <recommendedName>
        <fullName evidence="8">IQCJ-SCHIP1 readthrough transcript protein</fullName>
    </recommendedName>
</protein>
<organism evidence="7">
    <name type="scientific">Homo sapiens</name>
    <name type="common">Human</name>
    <dbReference type="NCBI Taxonomy" id="9606"/>
    <lineage>
        <taxon>Eukaryota</taxon>
        <taxon>Metazoa</taxon>
        <taxon>Chordata</taxon>
        <taxon>Craniata</taxon>
        <taxon>Vertebrata</taxon>
        <taxon>Euteleostomi</taxon>
        <taxon>Mammalia</taxon>
        <taxon>Eutheria</taxon>
        <taxon>Euarchontoglires</taxon>
        <taxon>Primates</taxon>
        <taxon>Haplorrhini</taxon>
        <taxon>Catarrhini</taxon>
        <taxon>Hominidae</taxon>
        <taxon>Homo</taxon>
    </lineage>
</organism>
<feature type="chain" id="PRO_0000442334" description="IQCJ-SCHIP1 readthrough transcript protein">
    <location>
        <begin position="1"/>
        <end position="563"/>
    </location>
</feature>
<feature type="domain" description="IQ">
    <location>
        <begin position="47"/>
        <end position="67"/>
    </location>
</feature>
<feature type="region of interest" description="Disordered" evidence="3">
    <location>
        <begin position="63"/>
        <end position="150"/>
    </location>
</feature>
<feature type="region of interest" description="Disordered" evidence="3">
    <location>
        <begin position="164"/>
        <end position="295"/>
    </location>
</feature>
<feature type="region of interest" description="Disordered" evidence="3">
    <location>
        <begin position="312"/>
        <end position="336"/>
    </location>
</feature>
<feature type="region of interest" description="Disordered" evidence="3">
    <location>
        <begin position="384"/>
        <end position="430"/>
    </location>
</feature>
<feature type="region of interest" description="Required for interaction with ankyrins" evidence="1">
    <location>
        <begin position="419"/>
        <end position="563"/>
    </location>
</feature>
<feature type="coiled-coil region" evidence="2">
    <location>
        <begin position="500"/>
        <end position="534"/>
    </location>
</feature>
<feature type="compositionally biased region" description="Low complexity" evidence="3">
    <location>
        <begin position="76"/>
        <end position="87"/>
    </location>
</feature>
<feature type="compositionally biased region" description="Polar residues" evidence="3">
    <location>
        <begin position="88"/>
        <end position="97"/>
    </location>
</feature>
<feature type="compositionally biased region" description="Low complexity" evidence="3">
    <location>
        <begin position="108"/>
        <end position="143"/>
    </location>
</feature>
<feature type="compositionally biased region" description="Acidic residues" evidence="3">
    <location>
        <begin position="168"/>
        <end position="182"/>
    </location>
</feature>
<feature type="compositionally biased region" description="Basic and acidic residues" evidence="3">
    <location>
        <begin position="183"/>
        <end position="199"/>
    </location>
</feature>
<feature type="compositionally biased region" description="Basic and acidic residues" evidence="3">
    <location>
        <begin position="229"/>
        <end position="238"/>
    </location>
</feature>
<feature type="compositionally biased region" description="Polar residues" evidence="3">
    <location>
        <begin position="318"/>
        <end position="331"/>
    </location>
</feature>
<feature type="compositionally biased region" description="Basic and acidic residues" evidence="3">
    <location>
        <begin position="385"/>
        <end position="399"/>
    </location>
</feature>
<feature type="compositionally biased region" description="Polar residues" evidence="3">
    <location>
        <begin position="400"/>
        <end position="411"/>
    </location>
</feature>
<feature type="compositionally biased region" description="Acidic residues" evidence="3">
    <location>
        <begin position="420"/>
        <end position="430"/>
    </location>
</feature>
<feature type="modified residue" description="Phosphoserine" evidence="9">
    <location>
        <position position="193"/>
    </location>
</feature>
<feature type="splice variant" id="VSP_059227" description="In isoform IQCJ-SCHIP1-2.">
    <location>
        <begin position="26"/>
        <end position="52"/>
    </location>
</feature>
<feature type="sequence conflict" description="In Ref. 2; BAG53300 and 1; ABA42890/ABA42889." evidence="6" ref="2 1">
    <original>Q</original>
    <variation>R</variation>
    <location>
        <position position="230"/>
    </location>
</feature>
<feature type="sequence conflict" description="In Ref. 2; BAG53300 and 1; ABA42890/ABA42889." evidence="6" ref="2 1">
    <original>D</original>
    <variation>A</variation>
    <location>
        <position position="536"/>
    </location>
</feature>
<dbReference type="EMBL" id="DQ157847">
    <property type="protein sequence ID" value="ABA42889.1"/>
    <property type="molecule type" value="mRNA"/>
</dbReference>
<dbReference type="EMBL" id="DQ157848">
    <property type="protein sequence ID" value="ABA42890.1"/>
    <property type="molecule type" value="mRNA"/>
</dbReference>
<dbReference type="EMBL" id="AK096479">
    <property type="protein sequence ID" value="BAG53300.1"/>
    <property type="molecule type" value="mRNA"/>
</dbReference>
<dbReference type="EMBL" id="AC021654">
    <property type="status" value="NOT_ANNOTATED_CDS"/>
    <property type="molecule type" value="Genomic_DNA"/>
</dbReference>
<dbReference type="EMBL" id="AC063955">
    <property type="status" value="NOT_ANNOTATED_CDS"/>
    <property type="molecule type" value="Genomic_DNA"/>
</dbReference>
<dbReference type="EMBL" id="AC068770">
    <property type="status" value="NOT_ANNOTATED_CDS"/>
    <property type="molecule type" value="Genomic_DNA"/>
</dbReference>
<dbReference type="EMBL" id="AC092861">
    <property type="status" value="NOT_ANNOTATED_CDS"/>
    <property type="molecule type" value="Genomic_DNA"/>
</dbReference>
<dbReference type="EMBL" id="AC092943">
    <property type="status" value="NOT_ANNOTATED_CDS"/>
    <property type="molecule type" value="Genomic_DNA"/>
</dbReference>
<dbReference type="EMBL" id="AC092997">
    <property type="status" value="NOT_ANNOTATED_CDS"/>
    <property type="molecule type" value="Genomic_DNA"/>
</dbReference>
<dbReference type="EMBL" id="AC107312">
    <property type="status" value="NOT_ANNOTATED_CDS"/>
    <property type="molecule type" value="Genomic_DNA"/>
</dbReference>
<dbReference type="EMBL" id="AC131150">
    <property type="status" value="NOT_ANNOTATED_CDS"/>
    <property type="molecule type" value="Genomic_DNA"/>
</dbReference>
<dbReference type="RefSeq" id="NP_001184042.1">
    <molecule id="B3KU38-1"/>
    <property type="nucleotide sequence ID" value="NM_001197113.2"/>
</dbReference>
<dbReference type="RefSeq" id="NP_001184043.1">
    <molecule id="B3KU38-2"/>
    <property type="nucleotide sequence ID" value="NM_001197114.2"/>
</dbReference>
<dbReference type="SMR" id="B3KU38"/>
<dbReference type="FunCoup" id="B3KU38">
    <property type="interactions" value="9"/>
</dbReference>
<dbReference type="STRING" id="9606.ENSP00000420182"/>
<dbReference type="iPTMnet" id="B3KU38"/>
<dbReference type="BioMuta" id="IQCJ-SCHIP1"/>
<dbReference type="jPOST" id="B3KU38"/>
<dbReference type="MassIVE" id="B3KU38"/>
<dbReference type="PaxDb" id="9606-ENSP00000420182"/>
<dbReference type="Pumba" id="B3KU38"/>
<dbReference type="Antibodypedia" id="78841">
    <property type="antibodies" value="134 antibodies from 12 providers"/>
</dbReference>
<dbReference type="DNASU" id="100505385"/>
<dbReference type="Ensembl" id="ENST00000476809.7">
    <molecule id="B3KU38-2"/>
    <property type="protein sequence ID" value="ENSP00000418692.1"/>
    <property type="gene ID" value="ENSG00000283154.4"/>
</dbReference>
<dbReference type="Ensembl" id="ENST00000485419.7">
    <molecule id="B3KU38-1"/>
    <property type="protein sequence ID" value="ENSP00000420182.1"/>
    <property type="gene ID" value="ENSG00000283154.4"/>
</dbReference>
<dbReference type="GeneID" id="100505385"/>
<dbReference type="KEGG" id="hsa:100505385"/>
<dbReference type="AGR" id="HGNC:38842"/>
<dbReference type="CTD" id="100505385"/>
<dbReference type="DisGeNET" id="100505385"/>
<dbReference type="GeneCards" id="IQCJ-SCHIP1"/>
<dbReference type="HGNC" id="HGNC:38842">
    <property type="gene designation" value="IQCJ-SCHIP1"/>
</dbReference>
<dbReference type="HPA" id="ENSG00000283154">
    <property type="expression patterns" value="Tissue enhanced (brain)"/>
</dbReference>
<dbReference type="neXtProt" id="NX_B3KU38"/>
<dbReference type="OpenTargets" id="ENSG00000283154"/>
<dbReference type="VEuPathDB" id="HostDB:ENSG00000283154"/>
<dbReference type="eggNOG" id="KOG4847">
    <property type="taxonomic scope" value="Eukaryota"/>
</dbReference>
<dbReference type="InParanoid" id="B3KU38"/>
<dbReference type="OMA" id="REQQNHN"/>
<dbReference type="OrthoDB" id="6260144at2759"/>
<dbReference type="PAN-GO" id="B3KU38">
    <property type="GO annotations" value="3 GO annotations based on evolutionary models"/>
</dbReference>
<dbReference type="PathwayCommons" id="B3KU38"/>
<dbReference type="BioGRID-ORCS" id="100505385">
    <property type="hits" value="11 hits in 1075 CRISPR screens"/>
</dbReference>
<dbReference type="ChiTaRS" id="IQCJ-SCHIP1">
    <property type="organism name" value="human"/>
</dbReference>
<dbReference type="GenomeRNAi" id="100505385"/>
<dbReference type="Pharos" id="B3KU38">
    <property type="development level" value="Tdark"/>
</dbReference>
<dbReference type="PRO" id="PR:B3KU38"/>
<dbReference type="Proteomes" id="UP000005640">
    <property type="component" value="Chromosome 3"/>
</dbReference>
<dbReference type="Bgee" id="ENSG00000283154">
    <property type="expression patterns" value="Expressed in ventricular zone and 99 other cell types or tissues"/>
</dbReference>
<dbReference type="ExpressionAtlas" id="B3KU38">
    <property type="expression patterns" value="baseline and differential"/>
</dbReference>
<dbReference type="GO" id="GO:0043194">
    <property type="term" value="C:axon initial segment"/>
    <property type="evidence" value="ECO:0000250"/>
    <property type="project" value="UniProtKB"/>
</dbReference>
<dbReference type="GO" id="GO:0030054">
    <property type="term" value="C:cell junction"/>
    <property type="evidence" value="ECO:0000318"/>
    <property type="project" value="GO_Central"/>
</dbReference>
<dbReference type="GO" id="GO:0005737">
    <property type="term" value="C:cytoplasm"/>
    <property type="evidence" value="ECO:0007669"/>
    <property type="project" value="UniProtKB-SubCell"/>
</dbReference>
<dbReference type="GO" id="GO:0005886">
    <property type="term" value="C:plasma membrane"/>
    <property type="evidence" value="ECO:0000318"/>
    <property type="project" value="GO_Central"/>
</dbReference>
<dbReference type="GO" id="GO:0051494">
    <property type="term" value="P:negative regulation of cytoskeleton organization"/>
    <property type="evidence" value="ECO:0000315"/>
    <property type="project" value="UniProtKB"/>
</dbReference>
<dbReference type="GO" id="GO:0035332">
    <property type="term" value="P:positive regulation of hippo signaling"/>
    <property type="evidence" value="ECO:0000318"/>
    <property type="project" value="GO_Central"/>
</dbReference>
<dbReference type="InterPro" id="IPR029362">
    <property type="entry name" value="IQCJ-SCHIP1_N"/>
</dbReference>
<dbReference type="InterPro" id="IPR039045">
    <property type="entry name" value="SCHIP_1"/>
</dbReference>
<dbReference type="InterPro" id="IPR015649">
    <property type="entry name" value="SCHIP_1_C"/>
</dbReference>
<dbReference type="PANTHER" id="PTHR13103:SF2">
    <property type="entry name" value="IQCJ-SCHIP1 READTHROUGH TRANSCRIPT PROTEIN-RELATED"/>
    <property type="match status" value="1"/>
</dbReference>
<dbReference type="PANTHER" id="PTHR13103">
    <property type="entry name" value="SCHWANNOMIN INTERACTING PROTEIN 1"/>
    <property type="match status" value="1"/>
</dbReference>
<dbReference type="Pfam" id="PF15157">
    <property type="entry name" value="IQCJ-SCHIP1"/>
    <property type="match status" value="1"/>
</dbReference>
<dbReference type="Pfam" id="PF10148">
    <property type="entry name" value="SCHIP-1_C"/>
    <property type="match status" value="1"/>
</dbReference>
<sequence length="563" mass="62248">MRLEELKRLQNPLEQVNDGKYSFENHQLAMDAENNIEKYPLNLQPLESKVKIIQRAWREYLQRQEPLGKRSPSPPSVSSEKLSSSVSMNTFSDSSTPDYREDGMDLGSDAGSSSSSSRASSQSNSTKVTPCSECKSSSSPGGSLDLVSALEDYEEPFPVYQKKVIDEWAPEEDGEEEEEEDERDQRGYRDDRSPAREPGDVSARTRSGGGGGRSATTAMPPPVPNGNLHQHDPQDLRHNGNVVVAGRPSCSRGPRRAIQKPQPAGGRRSGRGPAAGGLCLQPPDGGTCVPEEPPVPPMDWEALEKHLAGLQFREQEVRNQGQARTNSTSAQKNERESIRQKLALGSFFDDGPGIYTSCSKSGKPSLSSRLQSGMNLQICFVNDSGSDKDSDADDSKTETSLDTPLSPMSKQSSSYSDRDTTEEESESLDDMDFLTRQKKLQAEAKMALAMAKPMAKMQVEVEKQNRKKSPVADLLPHMPHISECLMKRSLKPTDLRDMTIGQLQVIVNDLHSQIESLNEELVQLLLIRDELHTEQDAMLVDIEDLTRHAESQQKHMAEKMPAK</sequence>
<evidence type="ECO:0000250" key="1">
    <source>
        <dbReference type="UniProtKB" id="A0A088MLT8"/>
    </source>
</evidence>
<evidence type="ECO:0000255" key="2"/>
<evidence type="ECO:0000256" key="3">
    <source>
        <dbReference type="SAM" id="MobiDB-lite"/>
    </source>
</evidence>
<evidence type="ECO:0000269" key="4">
    <source>
    </source>
</evidence>
<evidence type="ECO:0000269" key="5">
    <source>
    </source>
</evidence>
<evidence type="ECO:0000305" key="6"/>
<evidence type="ECO:0000312" key="7">
    <source>
        <dbReference type="EMBL" id="BAG53300.1"/>
    </source>
</evidence>
<evidence type="ECO:0000312" key="8">
    <source>
        <dbReference type="HGNC" id="HGNC:38842"/>
    </source>
</evidence>
<evidence type="ECO:0007744" key="9">
    <source>
    </source>
</evidence>
<comment type="function">
    <text evidence="1 5">May play a role in action potential conduction in myelinated cells through the organization of molecular complexes at nodes of Ranvier and axon initial segments (PubMed:25950943). May also play a role in axon outgrowth and guidance (By similarity).</text>
</comment>
<comment type="subunit">
    <text evidence="1 5">Homooligomer (via coiled coil domain). Interacts (via IQ domain) with calmodulin; the interaction is direct and lost in presence of calcium (By similarity). Interacts with ANK3 (via ANK repeats); required for localization at axon initial segments (AIS) and nodes of Ranvier (PubMed:25950943). Interacts with SPTBN4. Interacts with KCNQ2 and KCNQ3 (By similarity).</text>
</comment>
<comment type="subcellular location">
    <subcellularLocation>
        <location evidence="1">Cell projection</location>
        <location evidence="1">Axon</location>
    </subcellularLocation>
    <subcellularLocation>
        <location evidence="4">Cytoplasm</location>
    </subcellularLocation>
    <text evidence="1">Localizes to the axon initial segments (AIS) and nodes of Ranvier of neurons and is absent from dendrites.</text>
</comment>
<comment type="alternative products">
    <event type="alternative splicing"/>
    <isoform>
        <id>B3KU38-1</id>
        <name>IQCJ-SCHIP1-1</name>
        <sequence type="displayed"/>
    </isoform>
    <isoform>
        <id>B3KU38-2</id>
        <name>IQCJ-SCHIP1-2</name>
        <sequence type="described" ref="VSP_059227"/>
    </isoform>
    <isoform>
        <id>P0DPB3-1</id>
        <id>Q9P0W5-1</id>
        <name>SCHIP1-1</name>
        <name>SCHIP-1</name>
        <name>SCHIP-1a</name>
        <sequence type="external"/>
    </isoform>
    <isoform>
        <id>P0DPB3-2</id>
        <id>Q9P0W5-2</id>
        <name>SCHIP1-2</name>
        <name>SCHIP-1-D241/253</name>
        <sequence type="external"/>
    </isoform>
    <isoform>
        <id>P0DPB3-3</id>
        <id>Q9P0W5-3</id>
        <name>SCHIP1-3</name>
        <name>SCHIP-1-D22/253</name>
        <sequence type="external"/>
    </isoform>
    <isoform>
        <id>P0DPB3-4</id>
        <id>Q9P0W5-4</id>
        <name>SCHIP1-4</name>
        <sequence type="external"/>
    </isoform>
    <isoform>
        <id>Q1A5X6-1</id>
        <name>IQCJ-1</name>
        <sequence type="external"/>
    </isoform>
    <isoform>
        <id>Q1A5X6-2</id>
        <name>IQCJ-2</name>
        <sequence type="external"/>
    </isoform>
    <isoform>
        <id>Q1A5X6-3</id>
        <name>IQCJ-3</name>
        <sequence type="external"/>
    </isoform>
</comment>
<comment type="tissue specificity">
    <text evidence="4">Highly expressed in brain and to a lower extent in heart and kidney.</text>
</comment>
<comment type="developmental stage">
    <text evidence="4">Isoform IQCJ-SCHIP1-1 and isoform IQCJ-SCHIP1-2 are expressed in fetal brain, kidney, spleen and skeletal muscle. Isoform IQCJ-SCHIP1-2 is also detected in fetal heart and lung.</text>
</comment>
<comment type="miscellaneous">
    <molecule>Isoform IQCJ-SCHIP1-1</molecule>
    <text evidence="4">Based on a naturally occurring readthrough transcript which produces an IQCJ-SCHIP1 fusion protein.</text>
</comment>
<comment type="miscellaneous">
    <molecule>Isoform IQCJ-SCHIP1-2</molecule>
    <text evidence="4">Based on a naturally occurring readthrough transcript which produces an IQCJ-SCHIP1 fusion protein.</text>
</comment>
<proteinExistence type="evidence at protein level"/>
<name>IQIP1_HUMAN</name>
<reference key="1">
    <citation type="journal article" date="2006" name="Biochem. Biophys. Res. Commun.">
        <title>IQCJ-SCHIP1, a novel fusion transcript encoding a calmodulin-binding IQ motif protein.</title>
        <authorList>
            <person name="Kwasnicka-Crawford D.A."/>
            <person name="Carson A.R."/>
            <person name="Scherer S.W."/>
        </authorList>
    </citation>
    <scope>NUCLEOTIDE SEQUENCE [MRNA] (ISOFORMS IQCJ-SCHIP1-1 AND IQCJ-SCHIP1-2)</scope>
    <scope>SUBCELLULAR LOCATION</scope>
    <scope>TISSUE SPECIFICITY</scope>
    <scope>DEVELOPMENTAL STAGE</scope>
</reference>
<reference key="2">
    <citation type="journal article" date="2004" name="Nat. Genet.">
        <title>Complete sequencing and characterization of 21,243 full-length human cDNAs.</title>
        <authorList>
            <person name="Ota T."/>
            <person name="Suzuki Y."/>
            <person name="Nishikawa T."/>
            <person name="Otsuki T."/>
            <person name="Sugiyama T."/>
            <person name="Irie R."/>
            <person name="Wakamatsu A."/>
            <person name="Hayashi K."/>
            <person name="Sato H."/>
            <person name="Nagai K."/>
            <person name="Kimura K."/>
            <person name="Makita H."/>
            <person name="Sekine M."/>
            <person name="Obayashi M."/>
            <person name="Nishi T."/>
            <person name="Shibahara T."/>
            <person name="Tanaka T."/>
            <person name="Ishii S."/>
            <person name="Yamamoto J."/>
            <person name="Saito K."/>
            <person name="Kawai Y."/>
            <person name="Isono Y."/>
            <person name="Nakamura Y."/>
            <person name="Nagahari K."/>
            <person name="Murakami K."/>
            <person name="Yasuda T."/>
            <person name="Iwayanagi T."/>
            <person name="Wagatsuma M."/>
            <person name="Shiratori A."/>
            <person name="Sudo H."/>
            <person name="Hosoiri T."/>
            <person name="Kaku Y."/>
            <person name="Kodaira H."/>
            <person name="Kondo H."/>
            <person name="Sugawara M."/>
            <person name="Takahashi M."/>
            <person name="Kanda K."/>
            <person name="Yokoi T."/>
            <person name="Furuya T."/>
            <person name="Kikkawa E."/>
            <person name="Omura Y."/>
            <person name="Abe K."/>
            <person name="Kamihara K."/>
            <person name="Katsuta N."/>
            <person name="Sato K."/>
            <person name="Tanikawa M."/>
            <person name="Yamazaki M."/>
            <person name="Ninomiya K."/>
            <person name="Ishibashi T."/>
            <person name="Yamashita H."/>
            <person name="Murakawa K."/>
            <person name="Fujimori K."/>
            <person name="Tanai H."/>
            <person name="Kimata M."/>
            <person name="Watanabe M."/>
            <person name="Hiraoka S."/>
            <person name="Chiba Y."/>
            <person name="Ishida S."/>
            <person name="Ono Y."/>
            <person name="Takiguchi S."/>
            <person name="Watanabe S."/>
            <person name="Yosida M."/>
            <person name="Hotuta T."/>
            <person name="Kusano J."/>
            <person name="Kanehori K."/>
            <person name="Takahashi-Fujii A."/>
            <person name="Hara H."/>
            <person name="Tanase T.-O."/>
            <person name="Nomura Y."/>
            <person name="Togiya S."/>
            <person name="Komai F."/>
            <person name="Hara R."/>
            <person name="Takeuchi K."/>
            <person name="Arita M."/>
            <person name="Imose N."/>
            <person name="Musashino K."/>
            <person name="Yuuki H."/>
            <person name="Oshima A."/>
            <person name="Sasaki N."/>
            <person name="Aotsuka S."/>
            <person name="Yoshikawa Y."/>
            <person name="Matsunawa H."/>
            <person name="Ichihara T."/>
            <person name="Shiohata N."/>
            <person name="Sano S."/>
            <person name="Moriya S."/>
            <person name="Momiyama H."/>
            <person name="Satoh N."/>
            <person name="Takami S."/>
            <person name="Terashima Y."/>
            <person name="Suzuki O."/>
            <person name="Nakagawa S."/>
            <person name="Senoh A."/>
            <person name="Mizoguchi H."/>
            <person name="Goto Y."/>
            <person name="Shimizu F."/>
            <person name="Wakebe H."/>
            <person name="Hishigaki H."/>
            <person name="Watanabe T."/>
            <person name="Sugiyama A."/>
            <person name="Takemoto M."/>
            <person name="Kawakami B."/>
            <person name="Yamazaki M."/>
            <person name="Watanabe K."/>
            <person name="Kumagai A."/>
            <person name="Itakura S."/>
            <person name="Fukuzumi Y."/>
            <person name="Fujimori Y."/>
            <person name="Komiyama M."/>
            <person name="Tashiro H."/>
            <person name="Tanigami A."/>
            <person name="Fujiwara T."/>
            <person name="Ono T."/>
            <person name="Yamada K."/>
            <person name="Fujii Y."/>
            <person name="Ozaki K."/>
            <person name="Hirao M."/>
            <person name="Ohmori Y."/>
            <person name="Kawabata A."/>
            <person name="Hikiji T."/>
            <person name="Kobatake N."/>
            <person name="Inagaki H."/>
            <person name="Ikema Y."/>
            <person name="Okamoto S."/>
            <person name="Okitani R."/>
            <person name="Kawakami T."/>
            <person name="Noguchi S."/>
            <person name="Itoh T."/>
            <person name="Shigeta K."/>
            <person name="Senba T."/>
            <person name="Matsumura K."/>
            <person name="Nakajima Y."/>
            <person name="Mizuno T."/>
            <person name="Morinaga M."/>
            <person name="Sasaki M."/>
            <person name="Togashi T."/>
            <person name="Oyama M."/>
            <person name="Hata H."/>
            <person name="Watanabe M."/>
            <person name="Komatsu T."/>
            <person name="Mizushima-Sugano J."/>
            <person name="Satoh T."/>
            <person name="Shirai Y."/>
            <person name="Takahashi Y."/>
            <person name="Nakagawa K."/>
            <person name="Okumura K."/>
            <person name="Nagase T."/>
            <person name="Nomura N."/>
            <person name="Kikuchi H."/>
            <person name="Masuho Y."/>
            <person name="Yamashita R."/>
            <person name="Nakai K."/>
            <person name="Yada T."/>
            <person name="Nakamura Y."/>
            <person name="Ohara O."/>
            <person name="Isogai T."/>
            <person name="Sugano S."/>
        </authorList>
    </citation>
    <scope>NUCLEOTIDE SEQUENCE [LARGE SCALE MRNA] (ISOFORM IQCJ-SCHIP1-1)</scope>
    <source>
        <tissue>Brain</tissue>
    </source>
</reference>
<reference key="3">
    <citation type="journal article" date="2006" name="Nature">
        <title>The DNA sequence, annotation and analysis of human chromosome 3.</title>
        <authorList>
            <person name="Muzny D.M."/>
            <person name="Scherer S.E."/>
            <person name="Kaul R."/>
            <person name="Wang J."/>
            <person name="Yu J."/>
            <person name="Sudbrak R."/>
            <person name="Buhay C.J."/>
            <person name="Chen R."/>
            <person name="Cree A."/>
            <person name="Ding Y."/>
            <person name="Dugan-Rocha S."/>
            <person name="Gill R."/>
            <person name="Gunaratne P."/>
            <person name="Harris R.A."/>
            <person name="Hawes A.C."/>
            <person name="Hernandez J."/>
            <person name="Hodgson A.V."/>
            <person name="Hume J."/>
            <person name="Jackson A."/>
            <person name="Khan Z.M."/>
            <person name="Kovar-Smith C."/>
            <person name="Lewis L.R."/>
            <person name="Lozado R.J."/>
            <person name="Metzker M.L."/>
            <person name="Milosavljevic A."/>
            <person name="Miner G.R."/>
            <person name="Morgan M.B."/>
            <person name="Nazareth L.V."/>
            <person name="Scott G."/>
            <person name="Sodergren E."/>
            <person name="Song X.-Z."/>
            <person name="Steffen D."/>
            <person name="Wei S."/>
            <person name="Wheeler D.A."/>
            <person name="Wright M.W."/>
            <person name="Worley K.C."/>
            <person name="Yuan Y."/>
            <person name="Zhang Z."/>
            <person name="Adams C.Q."/>
            <person name="Ansari-Lari M.A."/>
            <person name="Ayele M."/>
            <person name="Brown M.J."/>
            <person name="Chen G."/>
            <person name="Chen Z."/>
            <person name="Clendenning J."/>
            <person name="Clerc-Blankenburg K.P."/>
            <person name="Chen R."/>
            <person name="Chen Z."/>
            <person name="Davis C."/>
            <person name="Delgado O."/>
            <person name="Dinh H.H."/>
            <person name="Dong W."/>
            <person name="Draper H."/>
            <person name="Ernst S."/>
            <person name="Fu G."/>
            <person name="Gonzalez-Garay M.L."/>
            <person name="Garcia D.K."/>
            <person name="Gillett W."/>
            <person name="Gu J."/>
            <person name="Hao B."/>
            <person name="Haugen E."/>
            <person name="Havlak P."/>
            <person name="He X."/>
            <person name="Hennig S."/>
            <person name="Hu S."/>
            <person name="Huang W."/>
            <person name="Jackson L.R."/>
            <person name="Jacob L.S."/>
            <person name="Kelly S.H."/>
            <person name="Kube M."/>
            <person name="Levy R."/>
            <person name="Li Z."/>
            <person name="Liu B."/>
            <person name="Liu J."/>
            <person name="Liu W."/>
            <person name="Lu J."/>
            <person name="Maheshwari M."/>
            <person name="Nguyen B.-V."/>
            <person name="Okwuonu G.O."/>
            <person name="Palmeiri A."/>
            <person name="Pasternak S."/>
            <person name="Perez L.M."/>
            <person name="Phelps K.A."/>
            <person name="Plopper F.J."/>
            <person name="Qiang B."/>
            <person name="Raymond C."/>
            <person name="Rodriguez R."/>
            <person name="Saenphimmachak C."/>
            <person name="Santibanez J."/>
            <person name="Shen H."/>
            <person name="Shen Y."/>
            <person name="Subramanian S."/>
            <person name="Tabor P.E."/>
            <person name="Verduzco D."/>
            <person name="Waldron L."/>
            <person name="Wang J."/>
            <person name="Wang J."/>
            <person name="Wang Q."/>
            <person name="Williams G.A."/>
            <person name="Wong G.K.-S."/>
            <person name="Yao Z."/>
            <person name="Zhang J."/>
            <person name="Zhang X."/>
            <person name="Zhao G."/>
            <person name="Zhou J."/>
            <person name="Zhou Y."/>
            <person name="Nelson D."/>
            <person name="Lehrach H."/>
            <person name="Reinhardt R."/>
            <person name="Naylor S.L."/>
            <person name="Yang H."/>
            <person name="Olson M."/>
            <person name="Weinstock G."/>
            <person name="Gibbs R.A."/>
        </authorList>
    </citation>
    <scope>NUCLEOTIDE SEQUENCE [LARGE SCALE GENOMIC DNA]</scope>
</reference>
<reference key="4">
    <citation type="journal article" date="2013" name="J. Proteome Res.">
        <title>Toward a comprehensive characterization of a human cancer cell phosphoproteome.</title>
        <authorList>
            <person name="Zhou H."/>
            <person name="Di Palma S."/>
            <person name="Preisinger C."/>
            <person name="Peng M."/>
            <person name="Polat A.N."/>
            <person name="Heck A.J."/>
            <person name="Mohammed S."/>
        </authorList>
    </citation>
    <scope>PHOSPHORYLATION [LARGE SCALE ANALYSIS] AT SER-193</scope>
    <scope>IDENTIFICATION BY MASS SPECTROMETRY [LARGE SCALE ANALYSIS]</scope>
    <source>
        <tissue>Cervix carcinoma</tissue>
    </source>
</reference>
<reference key="5">
    <citation type="journal article" date="2015" name="J. Neurochem.">
        <title>CK2-regulated schwannomin-interacting protein IQCJ-SCHIP-1 association with AnkG contributes to the maintenance of the axon initial segment.</title>
        <authorList>
            <person name="Papandreou M.J."/>
            <person name="Vacher H."/>
            <person name="Fache M.P."/>
            <person name="Klingler E."/>
            <person name="Rueda-Boroni F."/>
            <person name="Ferracci G."/>
            <person name="Debarnot C."/>
            <person name="Piperoglou C."/>
            <person name="Garcia Del Cano G."/>
            <person name="Goutebroze L."/>
            <person name="Dargent B."/>
        </authorList>
    </citation>
    <scope>FUNCTION</scope>
    <scope>INTERACTION WITH ANK3</scope>
</reference>
<keyword id="KW-0025">Alternative splicing</keyword>
<keyword id="KW-0966">Cell projection</keyword>
<keyword id="KW-0175">Coiled coil</keyword>
<keyword id="KW-0963">Cytoplasm</keyword>
<keyword id="KW-0597">Phosphoprotein</keyword>
<keyword id="KW-1185">Reference proteome</keyword>
<accession>B3KU38</accession>
<accession>B3KRM0</accession>
<accession>O75543</accession>
<accession>Q00P30</accession>
<accession>Q00P31</accession>
<accession>Q7Z3Y3</accession>
<accession>Q8IY83</accession>
<accession>Q9P0W3</accession>
<accession>Q9P0W4</accession>
<accession>Q9P0W5</accession>
<gene>
    <name evidence="8" type="primary">IQCJ-SCHIP1</name>
</gene>